<accession>Q29W37</accession>
<sequence>MRKSMISFLEKKAKNEKITMVSAYDYHSAKILDNCDIDIILVGDSLAMTVLGMQDTLSVTMDEMLIFTKAVSRGAKKSFVLADMPFMSYQSSDRDAILNASRFIKESHANGVKVEGGIEIASKIKLISQSGIPVVAHLGLTPQAVNMLGGYRVQGKDLQSAQKIIDDAKAVQDAGACMLVVECVPVKLAQKISSILEIPTIGIGSGKYCDGQVLVYHDLLGLNKDFKAKFVKHFDKIDPQVGVEKYRDEVKSGIFPSQEHSFDYLDDELLDKLY</sequence>
<organism>
    <name type="scientific">Campylobacter jejuni subsp. jejuni serotype O:23/36 (strain 81-176)</name>
    <dbReference type="NCBI Taxonomy" id="354242"/>
    <lineage>
        <taxon>Bacteria</taxon>
        <taxon>Pseudomonadati</taxon>
        <taxon>Campylobacterota</taxon>
        <taxon>Epsilonproteobacteria</taxon>
        <taxon>Campylobacterales</taxon>
        <taxon>Campylobacteraceae</taxon>
        <taxon>Campylobacter</taxon>
    </lineage>
</organism>
<protein>
    <recommendedName>
        <fullName evidence="1">3-methyl-2-oxobutanoate hydroxymethyltransferase</fullName>
        <ecNumber evidence="1">2.1.2.11</ecNumber>
    </recommendedName>
    <alternativeName>
        <fullName evidence="1">Ketopantoate hydroxymethyltransferase</fullName>
        <shortName evidence="1">KPHMT</shortName>
    </alternativeName>
</protein>
<evidence type="ECO:0000255" key="1">
    <source>
        <dbReference type="HAMAP-Rule" id="MF_00156"/>
    </source>
</evidence>
<gene>
    <name evidence="1" type="primary">panB</name>
    <name type="ordered locus">CJJ81176_0321</name>
</gene>
<proteinExistence type="inferred from homology"/>
<dbReference type="EC" id="2.1.2.11" evidence="1"/>
<dbReference type="EMBL" id="AY923838">
    <property type="protein sequence ID" value="AAX99088.1"/>
    <property type="molecule type" value="Genomic_DNA"/>
</dbReference>
<dbReference type="EMBL" id="CP000538">
    <property type="protein sequence ID" value="EAQ73429.1"/>
    <property type="molecule type" value="Genomic_DNA"/>
</dbReference>
<dbReference type="RefSeq" id="WP_009882002.1">
    <property type="nucleotide sequence ID" value="NC_008787.1"/>
</dbReference>
<dbReference type="SMR" id="Q29W37"/>
<dbReference type="KEGG" id="cjj:CJJ81176_0321"/>
<dbReference type="eggNOG" id="COG0413">
    <property type="taxonomic scope" value="Bacteria"/>
</dbReference>
<dbReference type="HOGENOM" id="CLU_036645_1_0_7"/>
<dbReference type="UniPathway" id="UPA00028">
    <property type="reaction ID" value="UER00003"/>
</dbReference>
<dbReference type="Proteomes" id="UP000000646">
    <property type="component" value="Chromosome"/>
</dbReference>
<dbReference type="GO" id="GO:0005737">
    <property type="term" value="C:cytoplasm"/>
    <property type="evidence" value="ECO:0007669"/>
    <property type="project" value="UniProtKB-SubCell"/>
</dbReference>
<dbReference type="GO" id="GO:0003864">
    <property type="term" value="F:3-methyl-2-oxobutanoate hydroxymethyltransferase activity"/>
    <property type="evidence" value="ECO:0007669"/>
    <property type="project" value="UniProtKB-UniRule"/>
</dbReference>
<dbReference type="GO" id="GO:0000287">
    <property type="term" value="F:magnesium ion binding"/>
    <property type="evidence" value="ECO:0007669"/>
    <property type="project" value="TreeGrafter"/>
</dbReference>
<dbReference type="GO" id="GO:0015940">
    <property type="term" value="P:pantothenate biosynthetic process"/>
    <property type="evidence" value="ECO:0007669"/>
    <property type="project" value="UniProtKB-UniRule"/>
</dbReference>
<dbReference type="CDD" id="cd06557">
    <property type="entry name" value="KPHMT-like"/>
    <property type="match status" value="1"/>
</dbReference>
<dbReference type="FunFam" id="3.20.20.60:FF:000003">
    <property type="entry name" value="3-methyl-2-oxobutanoate hydroxymethyltransferase"/>
    <property type="match status" value="1"/>
</dbReference>
<dbReference type="Gene3D" id="3.20.20.60">
    <property type="entry name" value="Phosphoenolpyruvate-binding domains"/>
    <property type="match status" value="1"/>
</dbReference>
<dbReference type="HAMAP" id="MF_00156">
    <property type="entry name" value="PanB"/>
    <property type="match status" value="1"/>
</dbReference>
<dbReference type="InterPro" id="IPR003700">
    <property type="entry name" value="Pantoate_hydroxy_MeTrfase"/>
</dbReference>
<dbReference type="InterPro" id="IPR015813">
    <property type="entry name" value="Pyrv/PenolPyrv_kinase-like_dom"/>
</dbReference>
<dbReference type="InterPro" id="IPR040442">
    <property type="entry name" value="Pyrv_kinase-like_dom_sf"/>
</dbReference>
<dbReference type="NCBIfam" id="TIGR00222">
    <property type="entry name" value="panB"/>
    <property type="match status" value="1"/>
</dbReference>
<dbReference type="NCBIfam" id="NF001452">
    <property type="entry name" value="PRK00311.1"/>
    <property type="match status" value="1"/>
</dbReference>
<dbReference type="PANTHER" id="PTHR20881">
    <property type="entry name" value="3-METHYL-2-OXOBUTANOATE HYDROXYMETHYLTRANSFERASE"/>
    <property type="match status" value="1"/>
</dbReference>
<dbReference type="PANTHER" id="PTHR20881:SF0">
    <property type="entry name" value="3-METHYL-2-OXOBUTANOATE HYDROXYMETHYLTRANSFERASE"/>
    <property type="match status" value="1"/>
</dbReference>
<dbReference type="Pfam" id="PF02548">
    <property type="entry name" value="Pantoate_transf"/>
    <property type="match status" value="1"/>
</dbReference>
<dbReference type="PIRSF" id="PIRSF000388">
    <property type="entry name" value="Pantoate_hydroxy_MeTrfase"/>
    <property type="match status" value="1"/>
</dbReference>
<dbReference type="SUPFAM" id="SSF51621">
    <property type="entry name" value="Phosphoenolpyruvate/pyruvate domain"/>
    <property type="match status" value="1"/>
</dbReference>
<feature type="chain" id="PRO_0000297240" description="3-methyl-2-oxobutanoate hydroxymethyltransferase">
    <location>
        <begin position="1"/>
        <end position="274"/>
    </location>
</feature>
<feature type="active site" description="Proton acceptor" evidence="1">
    <location>
        <position position="182"/>
    </location>
</feature>
<feature type="binding site" evidence="1">
    <location>
        <begin position="44"/>
        <end position="45"/>
    </location>
    <ligand>
        <name>3-methyl-2-oxobutanoate</name>
        <dbReference type="ChEBI" id="CHEBI:11851"/>
    </ligand>
</feature>
<feature type="binding site" evidence="1">
    <location>
        <position position="44"/>
    </location>
    <ligand>
        <name>Mg(2+)</name>
        <dbReference type="ChEBI" id="CHEBI:18420"/>
    </ligand>
</feature>
<feature type="binding site" evidence="1">
    <location>
        <position position="83"/>
    </location>
    <ligand>
        <name>3-methyl-2-oxobutanoate</name>
        <dbReference type="ChEBI" id="CHEBI:11851"/>
    </ligand>
</feature>
<feature type="binding site" evidence="1">
    <location>
        <position position="83"/>
    </location>
    <ligand>
        <name>Mg(2+)</name>
        <dbReference type="ChEBI" id="CHEBI:18420"/>
    </ligand>
</feature>
<feature type="binding site" evidence="1">
    <location>
        <position position="113"/>
    </location>
    <ligand>
        <name>3-methyl-2-oxobutanoate</name>
        <dbReference type="ChEBI" id="CHEBI:11851"/>
    </ligand>
</feature>
<feature type="binding site" evidence="1">
    <location>
        <position position="115"/>
    </location>
    <ligand>
        <name>Mg(2+)</name>
        <dbReference type="ChEBI" id="CHEBI:18420"/>
    </ligand>
</feature>
<reference key="1">
    <citation type="submission" date="2005-02" db="EMBL/GenBank/DDBJ databases">
        <title>Global expression profiling of the flagella regulon of Campylobacter jejuni 81-176 reveals a novel virulence determinant.</title>
        <authorList>
            <person name="Goon S.C."/>
            <person name="Holder L."/>
            <person name="Majam G."/>
            <person name="Lorenzo M."/>
            <person name="Pattarini D."/>
            <person name="Ewing C.P."/>
            <person name="Batchelor R."/>
            <person name="Guerry P."/>
        </authorList>
    </citation>
    <scope>NUCLEOTIDE SEQUENCE [GENOMIC DNA]</scope>
    <source>
        <strain>81-176</strain>
    </source>
</reference>
<reference key="2">
    <citation type="submission" date="2006-12" db="EMBL/GenBank/DDBJ databases">
        <authorList>
            <person name="Fouts D.E."/>
            <person name="Nelson K.E."/>
            <person name="Sebastian Y."/>
        </authorList>
    </citation>
    <scope>NUCLEOTIDE SEQUENCE [LARGE SCALE GENOMIC DNA]</scope>
    <source>
        <strain>81-176</strain>
    </source>
</reference>
<comment type="function">
    <text evidence="1">Catalyzes the reversible reaction in which hydroxymethyl group from 5,10-methylenetetrahydrofolate is transferred onto alpha-ketoisovalerate to form ketopantoate.</text>
</comment>
<comment type="catalytic activity">
    <reaction evidence="1">
        <text>3-methyl-2-oxobutanoate + (6R)-5,10-methylene-5,6,7,8-tetrahydrofolate + H2O = 2-dehydropantoate + (6S)-5,6,7,8-tetrahydrofolate</text>
        <dbReference type="Rhea" id="RHEA:11824"/>
        <dbReference type="ChEBI" id="CHEBI:11561"/>
        <dbReference type="ChEBI" id="CHEBI:11851"/>
        <dbReference type="ChEBI" id="CHEBI:15377"/>
        <dbReference type="ChEBI" id="CHEBI:15636"/>
        <dbReference type="ChEBI" id="CHEBI:57453"/>
        <dbReference type="EC" id="2.1.2.11"/>
    </reaction>
</comment>
<comment type="cofactor">
    <cofactor evidence="1">
        <name>Mg(2+)</name>
        <dbReference type="ChEBI" id="CHEBI:18420"/>
    </cofactor>
    <text evidence="1">Binds 1 Mg(2+) ion per subunit.</text>
</comment>
<comment type="pathway">
    <text evidence="1">Cofactor biosynthesis; (R)-pantothenate biosynthesis; (R)-pantoate from 3-methyl-2-oxobutanoate: step 1/2.</text>
</comment>
<comment type="subunit">
    <text evidence="1">Homodecamer; pentamer of dimers.</text>
</comment>
<comment type="subcellular location">
    <subcellularLocation>
        <location evidence="1">Cytoplasm</location>
    </subcellularLocation>
</comment>
<comment type="similarity">
    <text evidence="1">Belongs to the PanB family.</text>
</comment>
<name>PANB_CAMJJ</name>
<keyword id="KW-0963">Cytoplasm</keyword>
<keyword id="KW-0460">Magnesium</keyword>
<keyword id="KW-0479">Metal-binding</keyword>
<keyword id="KW-0566">Pantothenate biosynthesis</keyword>
<keyword id="KW-0808">Transferase</keyword>